<protein>
    <recommendedName>
        <fullName evidence="1">Pyrimidine/purine nucleoside phosphorylase</fullName>
        <ecNumber evidence="1">2.4.2.1</ecNumber>
        <ecNumber evidence="1">2.4.2.2</ecNumber>
    </recommendedName>
    <alternativeName>
        <fullName evidence="1">Adenosine phosphorylase</fullName>
    </alternativeName>
    <alternativeName>
        <fullName evidence="1">Cytidine phosphorylase</fullName>
    </alternativeName>
    <alternativeName>
        <fullName evidence="1">Guanosine phosphorylase</fullName>
    </alternativeName>
    <alternativeName>
        <fullName evidence="1">Inosine phosphorylase</fullName>
    </alternativeName>
    <alternativeName>
        <fullName evidence="1">Thymidine phosphorylase</fullName>
    </alternativeName>
    <alternativeName>
        <fullName evidence="1">Uridine phosphorylase</fullName>
    </alternativeName>
    <alternativeName>
        <fullName evidence="1">Xanthosine phosphorylase</fullName>
    </alternativeName>
</protein>
<sequence>MLNVNEYFAGKVKSIGYDSGSIGRASVGVMEKGEYTFTTDRPEEMTVVTGALRVLIPGAPDWQVFTPGETFFVPERSEFNLQVAEPSAYLCKYLS</sequence>
<feature type="chain" id="PRO_1000215413" description="Pyrimidine/purine nucleoside phosphorylase">
    <location>
        <begin position="1"/>
        <end position="95"/>
    </location>
</feature>
<organism>
    <name type="scientific">Edwardsiella ictaluri (strain 93-146)</name>
    <dbReference type="NCBI Taxonomy" id="634503"/>
    <lineage>
        <taxon>Bacteria</taxon>
        <taxon>Pseudomonadati</taxon>
        <taxon>Pseudomonadota</taxon>
        <taxon>Gammaproteobacteria</taxon>
        <taxon>Enterobacterales</taxon>
        <taxon>Hafniaceae</taxon>
        <taxon>Edwardsiella</taxon>
    </lineage>
</organism>
<evidence type="ECO:0000255" key="1">
    <source>
        <dbReference type="HAMAP-Rule" id="MF_01537"/>
    </source>
</evidence>
<name>PPNP_EDWI9</name>
<dbReference type="EC" id="2.4.2.1" evidence="1"/>
<dbReference type="EC" id="2.4.2.2" evidence="1"/>
<dbReference type="EMBL" id="CP001600">
    <property type="protein sequence ID" value="ACR68382.1"/>
    <property type="molecule type" value="Genomic_DNA"/>
</dbReference>
<dbReference type="RefSeq" id="WP_015870556.1">
    <property type="nucleotide sequence ID" value="NZ_CP169062.1"/>
</dbReference>
<dbReference type="SMR" id="C5BHN8"/>
<dbReference type="STRING" id="67780.B6E78_16180"/>
<dbReference type="GeneID" id="69538199"/>
<dbReference type="KEGG" id="eic:NT01EI_1174"/>
<dbReference type="PATRIC" id="fig|634503.3.peg.1063"/>
<dbReference type="HOGENOM" id="CLU_157874_0_0_6"/>
<dbReference type="OrthoDB" id="9793848at2"/>
<dbReference type="Proteomes" id="UP000001485">
    <property type="component" value="Chromosome"/>
</dbReference>
<dbReference type="GO" id="GO:0005829">
    <property type="term" value="C:cytosol"/>
    <property type="evidence" value="ECO:0007669"/>
    <property type="project" value="TreeGrafter"/>
</dbReference>
<dbReference type="GO" id="GO:0047975">
    <property type="term" value="F:guanosine phosphorylase activity"/>
    <property type="evidence" value="ECO:0007669"/>
    <property type="project" value="UniProtKB-EC"/>
</dbReference>
<dbReference type="GO" id="GO:0004731">
    <property type="term" value="F:purine-nucleoside phosphorylase activity"/>
    <property type="evidence" value="ECO:0007669"/>
    <property type="project" value="UniProtKB-UniRule"/>
</dbReference>
<dbReference type="GO" id="GO:0009032">
    <property type="term" value="F:thymidine phosphorylase activity"/>
    <property type="evidence" value="ECO:0007669"/>
    <property type="project" value="UniProtKB-EC"/>
</dbReference>
<dbReference type="GO" id="GO:0004850">
    <property type="term" value="F:uridine phosphorylase activity"/>
    <property type="evidence" value="ECO:0007669"/>
    <property type="project" value="UniProtKB-EC"/>
</dbReference>
<dbReference type="FunFam" id="2.60.120.10:FF:000016">
    <property type="entry name" value="Pyrimidine/purine nucleoside phosphorylase"/>
    <property type="match status" value="1"/>
</dbReference>
<dbReference type="Gene3D" id="2.60.120.10">
    <property type="entry name" value="Jelly Rolls"/>
    <property type="match status" value="1"/>
</dbReference>
<dbReference type="HAMAP" id="MF_01537">
    <property type="entry name" value="Nucleos_phosphorylase_PpnP"/>
    <property type="match status" value="1"/>
</dbReference>
<dbReference type="InterPro" id="IPR009664">
    <property type="entry name" value="Ppnp"/>
</dbReference>
<dbReference type="InterPro" id="IPR014710">
    <property type="entry name" value="RmlC-like_jellyroll"/>
</dbReference>
<dbReference type="InterPro" id="IPR011051">
    <property type="entry name" value="RmlC_Cupin_sf"/>
</dbReference>
<dbReference type="NCBIfam" id="NF007875">
    <property type="entry name" value="PRK10579.1"/>
    <property type="match status" value="1"/>
</dbReference>
<dbReference type="PANTHER" id="PTHR36540">
    <property type="entry name" value="PYRIMIDINE/PURINE NUCLEOSIDE PHOSPHORYLASE"/>
    <property type="match status" value="1"/>
</dbReference>
<dbReference type="PANTHER" id="PTHR36540:SF1">
    <property type="entry name" value="PYRIMIDINE_PURINE NUCLEOSIDE PHOSPHORYLASE"/>
    <property type="match status" value="1"/>
</dbReference>
<dbReference type="Pfam" id="PF06865">
    <property type="entry name" value="Ppnp"/>
    <property type="match status" value="1"/>
</dbReference>
<dbReference type="SUPFAM" id="SSF51182">
    <property type="entry name" value="RmlC-like cupins"/>
    <property type="match status" value="1"/>
</dbReference>
<comment type="function">
    <text evidence="1">Catalyzes the phosphorolysis of diverse nucleosides, yielding D-ribose 1-phosphate and the respective free bases. Can use uridine, adenosine, guanosine, cytidine, thymidine, inosine and xanthosine as substrates. Also catalyzes the reverse reactions.</text>
</comment>
<comment type="catalytic activity">
    <reaction evidence="1">
        <text>a purine D-ribonucleoside + phosphate = a purine nucleobase + alpha-D-ribose 1-phosphate</text>
        <dbReference type="Rhea" id="RHEA:19805"/>
        <dbReference type="ChEBI" id="CHEBI:26386"/>
        <dbReference type="ChEBI" id="CHEBI:43474"/>
        <dbReference type="ChEBI" id="CHEBI:57720"/>
        <dbReference type="ChEBI" id="CHEBI:142355"/>
        <dbReference type="EC" id="2.4.2.1"/>
    </reaction>
</comment>
<comment type="catalytic activity">
    <reaction evidence="1">
        <text>adenosine + phosphate = alpha-D-ribose 1-phosphate + adenine</text>
        <dbReference type="Rhea" id="RHEA:27642"/>
        <dbReference type="ChEBI" id="CHEBI:16335"/>
        <dbReference type="ChEBI" id="CHEBI:16708"/>
        <dbReference type="ChEBI" id="CHEBI:43474"/>
        <dbReference type="ChEBI" id="CHEBI:57720"/>
        <dbReference type="EC" id="2.4.2.1"/>
    </reaction>
</comment>
<comment type="catalytic activity">
    <reaction evidence="1">
        <text>cytidine + phosphate = cytosine + alpha-D-ribose 1-phosphate</text>
        <dbReference type="Rhea" id="RHEA:52540"/>
        <dbReference type="ChEBI" id="CHEBI:16040"/>
        <dbReference type="ChEBI" id="CHEBI:17562"/>
        <dbReference type="ChEBI" id="CHEBI:43474"/>
        <dbReference type="ChEBI" id="CHEBI:57720"/>
        <dbReference type="EC" id="2.4.2.2"/>
    </reaction>
</comment>
<comment type="catalytic activity">
    <reaction evidence="1">
        <text>guanosine + phosphate = alpha-D-ribose 1-phosphate + guanine</text>
        <dbReference type="Rhea" id="RHEA:13233"/>
        <dbReference type="ChEBI" id="CHEBI:16235"/>
        <dbReference type="ChEBI" id="CHEBI:16750"/>
        <dbReference type="ChEBI" id="CHEBI:43474"/>
        <dbReference type="ChEBI" id="CHEBI:57720"/>
        <dbReference type="EC" id="2.4.2.1"/>
    </reaction>
</comment>
<comment type="catalytic activity">
    <reaction evidence="1">
        <text>inosine + phosphate = alpha-D-ribose 1-phosphate + hypoxanthine</text>
        <dbReference type="Rhea" id="RHEA:27646"/>
        <dbReference type="ChEBI" id="CHEBI:17368"/>
        <dbReference type="ChEBI" id="CHEBI:17596"/>
        <dbReference type="ChEBI" id="CHEBI:43474"/>
        <dbReference type="ChEBI" id="CHEBI:57720"/>
        <dbReference type="EC" id="2.4.2.1"/>
    </reaction>
</comment>
<comment type="catalytic activity">
    <reaction evidence="1">
        <text>thymidine + phosphate = 2-deoxy-alpha-D-ribose 1-phosphate + thymine</text>
        <dbReference type="Rhea" id="RHEA:16037"/>
        <dbReference type="ChEBI" id="CHEBI:17748"/>
        <dbReference type="ChEBI" id="CHEBI:17821"/>
        <dbReference type="ChEBI" id="CHEBI:43474"/>
        <dbReference type="ChEBI" id="CHEBI:57259"/>
        <dbReference type="EC" id="2.4.2.2"/>
    </reaction>
</comment>
<comment type="catalytic activity">
    <reaction evidence="1">
        <text>uridine + phosphate = alpha-D-ribose 1-phosphate + uracil</text>
        <dbReference type="Rhea" id="RHEA:24388"/>
        <dbReference type="ChEBI" id="CHEBI:16704"/>
        <dbReference type="ChEBI" id="CHEBI:17568"/>
        <dbReference type="ChEBI" id="CHEBI:43474"/>
        <dbReference type="ChEBI" id="CHEBI:57720"/>
        <dbReference type="EC" id="2.4.2.2"/>
    </reaction>
</comment>
<comment type="catalytic activity">
    <reaction evidence="1">
        <text>xanthosine + phosphate = alpha-D-ribose 1-phosphate + xanthine</text>
        <dbReference type="Rhea" id="RHEA:27638"/>
        <dbReference type="ChEBI" id="CHEBI:17712"/>
        <dbReference type="ChEBI" id="CHEBI:18107"/>
        <dbReference type="ChEBI" id="CHEBI:43474"/>
        <dbReference type="ChEBI" id="CHEBI:57720"/>
        <dbReference type="EC" id="2.4.2.1"/>
    </reaction>
</comment>
<comment type="similarity">
    <text evidence="1">Belongs to the nucleoside phosphorylase PpnP family.</text>
</comment>
<accession>C5BHN8</accession>
<proteinExistence type="inferred from homology"/>
<keyword id="KW-0328">Glycosyltransferase</keyword>
<keyword id="KW-0808">Transferase</keyword>
<reference key="1">
    <citation type="submission" date="2009-03" db="EMBL/GenBank/DDBJ databases">
        <title>Complete genome sequence of Edwardsiella ictaluri 93-146.</title>
        <authorList>
            <person name="Williams M.L."/>
            <person name="Gillaspy A.F."/>
            <person name="Dyer D.W."/>
            <person name="Thune R.L."/>
            <person name="Waldbieser G.C."/>
            <person name="Schuster S.C."/>
            <person name="Gipson J."/>
            <person name="Zaitshik J."/>
            <person name="Landry C."/>
            <person name="Lawrence M.L."/>
        </authorList>
    </citation>
    <scope>NUCLEOTIDE SEQUENCE [LARGE SCALE GENOMIC DNA]</scope>
    <source>
        <strain>93-146</strain>
    </source>
</reference>
<gene>
    <name evidence="1" type="primary">ppnP</name>
    <name type="ordered locus">NT01EI_1174</name>
</gene>